<organism>
    <name type="scientific">Vaccinia virus (strain Copenhagen)</name>
    <name type="common">VACV</name>
    <dbReference type="NCBI Taxonomy" id="10249"/>
    <lineage>
        <taxon>Viruses</taxon>
        <taxon>Varidnaviria</taxon>
        <taxon>Bamfordvirae</taxon>
        <taxon>Nucleocytoviricota</taxon>
        <taxon>Pokkesviricetes</taxon>
        <taxon>Chitovirales</taxon>
        <taxon>Poxviridae</taxon>
        <taxon>Chordopoxvirinae</taxon>
        <taxon>Orthopoxvirus</taxon>
        <taxon>Vaccinia virus</taxon>
    </lineage>
</organism>
<proteinExistence type="uncertain"/>
<evidence type="ECO:0000305" key="1"/>
<name>SPI2A_VACCC</name>
<keyword id="KW-1185">Reference proteome</keyword>
<sequence>MKGENVFISPASISSVLTILYYGANGSTAEQLSKYVETEENTDKVSAQNISFKSINKVYGRYSAVFKDFFLGKIGDKFQTVDFTDCRTIDAINKCVDIFTEGKINPLLDEPLSPSN</sequence>
<gene>
    <name type="ORF">B13R</name>
</gene>
<dbReference type="EMBL" id="M35027">
    <property type="protein sequence ID" value="AAA48210.1"/>
    <property type="molecule type" value="Genomic_DNA"/>
</dbReference>
<dbReference type="SMR" id="P20841"/>
<dbReference type="MEROPS" id="I04.028"/>
<dbReference type="Proteomes" id="UP000008269">
    <property type="component" value="Segment"/>
</dbReference>
<dbReference type="GO" id="GO:0005615">
    <property type="term" value="C:extracellular space"/>
    <property type="evidence" value="ECO:0007669"/>
    <property type="project" value="InterPro"/>
</dbReference>
<dbReference type="GO" id="GO:0004867">
    <property type="term" value="F:serine-type endopeptidase inhibitor activity"/>
    <property type="evidence" value="ECO:0007669"/>
    <property type="project" value="InterPro"/>
</dbReference>
<dbReference type="Gene3D" id="3.30.497.10">
    <property type="entry name" value="Antithrombin, subunit I, domain 2"/>
    <property type="match status" value="1"/>
</dbReference>
<dbReference type="Gene3D" id="1.10.287.580">
    <property type="entry name" value="Helix hairpin bin"/>
    <property type="match status" value="1"/>
</dbReference>
<dbReference type="InterPro" id="IPR023796">
    <property type="entry name" value="Serpin_dom"/>
</dbReference>
<dbReference type="InterPro" id="IPR000215">
    <property type="entry name" value="Serpin_fam"/>
</dbReference>
<dbReference type="InterPro" id="IPR036186">
    <property type="entry name" value="Serpin_sf"/>
</dbReference>
<dbReference type="InterPro" id="IPR042178">
    <property type="entry name" value="Serpin_sf_1"/>
</dbReference>
<dbReference type="PANTHER" id="PTHR11461:SF211">
    <property type="entry name" value="GH10112P-RELATED"/>
    <property type="match status" value="1"/>
</dbReference>
<dbReference type="PANTHER" id="PTHR11461">
    <property type="entry name" value="SERINE PROTEASE INHIBITOR, SERPIN"/>
    <property type="match status" value="1"/>
</dbReference>
<dbReference type="Pfam" id="PF00079">
    <property type="entry name" value="Serpin"/>
    <property type="match status" value="1"/>
</dbReference>
<dbReference type="SUPFAM" id="SSF56574">
    <property type="entry name" value="Serpins"/>
    <property type="match status" value="1"/>
</dbReference>
<organismHost>
    <name type="scientific">Homo sapiens</name>
    <name type="common">Human</name>
    <dbReference type="NCBI Taxonomy" id="9606"/>
</organismHost>
<feature type="chain" id="PRO_0000094142" description="Putative serine proteinase inhibitor 2 homolog first part">
    <location>
        <begin position="1"/>
        <end position="116"/>
    </location>
</feature>
<accession>P20841</accession>
<comment type="similarity">
    <text evidence="1">Belongs to the serpin family. Poxviruses subfamily.</text>
</comment>
<comment type="caution">
    <text evidence="1">Could be the product of a pseudogene. In contrast to strain WR, where the SPI-2 inhibitor may be involved in the regulation of the complement cascade, in strain Copenhagen it is interrupted by a stop codon and thus is found in two parts.</text>
</comment>
<protein>
    <recommendedName>
        <fullName>Putative serine proteinase inhibitor 2 homolog first part</fullName>
    </recommendedName>
</protein>
<reference key="1">
    <citation type="journal article" date="1990" name="Virology">
        <title>The complete DNA sequence of vaccinia virus.</title>
        <authorList>
            <person name="Goebel S.J."/>
            <person name="Johnson G.P."/>
            <person name="Perkus M.E."/>
            <person name="Davis S.W."/>
            <person name="Winslow J.P."/>
            <person name="Paoletti E."/>
        </authorList>
    </citation>
    <scope>NUCLEOTIDE SEQUENCE [LARGE SCALE GENOMIC DNA]</scope>
</reference>
<reference key="2">
    <citation type="journal article" date="1990" name="Virology">
        <title>Appendix to 'The complete DNA sequence of vaccinia virus'.</title>
        <authorList>
            <person name="Goebel S.J."/>
            <person name="Johnson G.P."/>
            <person name="Perkus M.E."/>
            <person name="Davis S.W."/>
            <person name="Winslow J.P."/>
            <person name="Paoletti E."/>
        </authorList>
    </citation>
    <scope>COMPLETE GENOME</scope>
</reference>